<proteinExistence type="inferred from homology"/>
<evidence type="ECO:0000250" key="1"/>
<evidence type="ECO:0000250" key="2">
    <source>
        <dbReference type="UniProtKB" id="P11245"/>
    </source>
</evidence>
<evidence type="ECO:0000269" key="3">
    <source ref="1"/>
</evidence>
<evidence type="ECO:0000305" key="4"/>
<name>ARY2_MACMU</name>
<protein>
    <recommendedName>
        <fullName>Arylamine N-acetyltransferase 2</fullName>
        <ecNumber evidence="2">2.3.1.5</ecNumber>
    </recommendedName>
    <alternativeName>
        <fullName>Arylamide acetylase 2</fullName>
    </alternativeName>
    <alternativeName>
        <fullName>N-acetyltransferase type 2</fullName>
        <shortName>NAT-2</shortName>
    </alternativeName>
    <alternativeName>
        <fullName>N-hydroxyarylamine O-acetyltransferase</fullName>
        <ecNumber evidence="2">2.3.1.118</ecNumber>
    </alternativeName>
    <alternativeName>
        <fullName>Polymorphic arylamine N-acetyltransferase</fullName>
        <shortName>PNAT</shortName>
    </alternativeName>
</protein>
<comment type="function">
    <text evidence="2">Catalyzes the N- or O-acetylation of various arylamine and heterocyclic amine substrates, and participates in the detoxification of a plethora of hydrazine and arylamine drugs.</text>
</comment>
<comment type="catalytic activity">
    <reaction evidence="2">
        <text>an arylamine + acetyl-CoA = an N-acetylarylamine + CoA</text>
        <dbReference type="Rhea" id="RHEA:16613"/>
        <dbReference type="ChEBI" id="CHEBI:13790"/>
        <dbReference type="ChEBI" id="CHEBI:50471"/>
        <dbReference type="ChEBI" id="CHEBI:57287"/>
        <dbReference type="ChEBI" id="CHEBI:57288"/>
        <dbReference type="EC" id="2.3.1.5"/>
    </reaction>
</comment>
<comment type="catalytic activity">
    <reaction evidence="2">
        <text>an N-hydroxyarylamine + acetyl-CoA = an N-acetoxyarylamine + CoA</text>
        <dbReference type="Rhea" id="RHEA:20277"/>
        <dbReference type="ChEBI" id="CHEBI:13792"/>
        <dbReference type="ChEBI" id="CHEBI:21494"/>
        <dbReference type="ChEBI" id="CHEBI:57287"/>
        <dbReference type="ChEBI" id="CHEBI:57288"/>
        <dbReference type="EC" id="2.3.1.118"/>
    </reaction>
</comment>
<comment type="subcellular location">
    <subcellularLocation>
        <location evidence="1">Cytoplasm</location>
    </subcellularLocation>
</comment>
<comment type="similarity">
    <text evidence="4">Belongs to the arylamine N-acetyltransferase family.</text>
</comment>
<dbReference type="EC" id="2.3.1.5" evidence="2"/>
<dbReference type="EC" id="2.3.1.118" evidence="2"/>
<dbReference type="EMBL" id="AJ504439">
    <property type="protein sequence ID" value="CAD43197.1"/>
    <property type="molecule type" value="Genomic_DNA"/>
</dbReference>
<dbReference type="EMBL" id="AJ504440">
    <property type="protein sequence ID" value="CAD43198.1"/>
    <property type="molecule type" value="Genomic_DNA"/>
</dbReference>
<dbReference type="RefSeq" id="NP_001038201.1">
    <property type="nucleotide sequence ID" value="NM_001044736.1"/>
</dbReference>
<dbReference type="RefSeq" id="XP_015000281.1">
    <property type="nucleotide sequence ID" value="XM_015144795.2"/>
</dbReference>
<dbReference type="SMR" id="Q7YRG5"/>
<dbReference type="FunCoup" id="Q7YRG5">
    <property type="interactions" value="82"/>
</dbReference>
<dbReference type="STRING" id="9544.ENSMMUP00000028547"/>
<dbReference type="PaxDb" id="9544-ENSMMUP00000028547"/>
<dbReference type="Ensembl" id="ENSMMUT00000030505.4">
    <property type="protein sequence ID" value="ENSMMUP00000028547.2"/>
    <property type="gene ID" value="ENSMMUG00000021680.4"/>
</dbReference>
<dbReference type="GeneID" id="704357"/>
<dbReference type="KEGG" id="mcc:704357"/>
<dbReference type="CTD" id="10"/>
<dbReference type="VEuPathDB" id="HostDB:ENSMMUG00000021680"/>
<dbReference type="VGNC" id="VGNC:84092">
    <property type="gene designation" value="NAT2"/>
</dbReference>
<dbReference type="eggNOG" id="ENOG502RD0D">
    <property type="taxonomic scope" value="Eukaryota"/>
</dbReference>
<dbReference type="GeneTree" id="ENSGT00390000012054"/>
<dbReference type="HOGENOM" id="CLU_049918_3_0_1"/>
<dbReference type="InParanoid" id="Q7YRG5"/>
<dbReference type="OMA" id="HCGQAME"/>
<dbReference type="OrthoDB" id="9479791at2759"/>
<dbReference type="TreeFam" id="TF106311"/>
<dbReference type="BRENDA" id="2.3.1.5">
    <property type="organism ID" value="3126"/>
</dbReference>
<dbReference type="Proteomes" id="UP000006718">
    <property type="component" value="Chromosome 8"/>
</dbReference>
<dbReference type="Bgee" id="ENSMMUG00000021680">
    <property type="expression patterns" value="Expressed in liver and 9 other cell types or tissues"/>
</dbReference>
<dbReference type="ExpressionAtlas" id="Q7YRG5">
    <property type="expression patterns" value="baseline"/>
</dbReference>
<dbReference type="GO" id="GO:0005737">
    <property type="term" value="C:cytoplasm"/>
    <property type="evidence" value="ECO:0007669"/>
    <property type="project" value="UniProtKB-SubCell"/>
</dbReference>
<dbReference type="GO" id="GO:0004060">
    <property type="term" value="F:arylamine N-acetyltransferase activity"/>
    <property type="evidence" value="ECO:0000318"/>
    <property type="project" value="GO_Central"/>
</dbReference>
<dbReference type="GO" id="GO:0046990">
    <property type="term" value="F:N-hydroxyarylamine O-acetyltransferase activity"/>
    <property type="evidence" value="ECO:0000250"/>
    <property type="project" value="UniProtKB"/>
</dbReference>
<dbReference type="FunFam" id="3.30.2140.20:FF:000001">
    <property type="entry name" value="Arylamine N-acetyltransferase 1"/>
    <property type="match status" value="1"/>
</dbReference>
<dbReference type="Gene3D" id="3.30.2140.20">
    <property type="match status" value="1"/>
</dbReference>
<dbReference type="InterPro" id="IPR001447">
    <property type="entry name" value="Arylamine_N-AcTrfase"/>
</dbReference>
<dbReference type="InterPro" id="IPR053710">
    <property type="entry name" value="Arylamine_NAT_domain_sf"/>
</dbReference>
<dbReference type="InterPro" id="IPR038765">
    <property type="entry name" value="Papain-like_cys_pep_sf"/>
</dbReference>
<dbReference type="PANTHER" id="PTHR11786:SF6">
    <property type="entry name" value="ARYLAMINE N-ACETYLTRANSFERASE 2"/>
    <property type="match status" value="1"/>
</dbReference>
<dbReference type="PANTHER" id="PTHR11786">
    <property type="entry name" value="N-HYDROXYARYLAMINE O-ACETYLTRANSFERASE"/>
    <property type="match status" value="1"/>
</dbReference>
<dbReference type="Pfam" id="PF00797">
    <property type="entry name" value="Acetyltransf_2"/>
    <property type="match status" value="1"/>
</dbReference>
<dbReference type="PRINTS" id="PR01543">
    <property type="entry name" value="ANATRNSFRASE"/>
</dbReference>
<dbReference type="SUPFAM" id="SSF54001">
    <property type="entry name" value="Cysteine proteinases"/>
    <property type="match status" value="1"/>
</dbReference>
<keyword id="KW-0012">Acyltransferase</keyword>
<keyword id="KW-0963">Cytoplasm</keyword>
<keyword id="KW-1185">Reference proteome</keyword>
<keyword id="KW-0808">Transferase</keyword>
<accession>Q7YRG5</accession>
<accession>Q7YRG6</accession>
<reference key="1">
    <citation type="submission" date="2002-07" db="EMBL/GenBank/DDBJ databases">
        <title>Cloning of a gene encoding for arylamine N-acetyltransferase in the rhezus monkey; description and functional analysis of two polymorphic alleles.</title>
        <authorList>
            <person name="Fakis G."/>
            <person name="Boukouvala S."/>
            <person name="Sim E."/>
            <person name="Kennedy S."/>
        </authorList>
    </citation>
    <scope>NUCLEOTIDE SEQUENCE [GENOMIC DNA]</scope>
    <scope>VARIANT ILE-231</scope>
</reference>
<sequence>MDIEAYFERIGYKNSRNKLDLETLTDILEHQIRAVPFENLNMHCGEAMELGLETIFDHIVRRNRGGWCLQVNQLLYWALTTIGFQTTMLGGYVYIPAANKYSTGMIHLLLQVTIDGRNYIADAGFGSSSQMWQPLELISGKDQPQMPSIFRLTEQKGIWYLDQIRREQYIPNTEFLNSDLLPKTTHQKVYSFTLEPRKIEDFESMNTYLQTSPTSAFTTTSFCSLQTPEGVHCLVGFTLTYRIFNYKDNTDLIEFKTLIEEEVEEVLKNIFKISLGRKLVPKPGNGSFTI</sequence>
<feature type="chain" id="PRO_0000254005" description="Arylamine N-acetyltransferase 2">
    <location>
        <begin position="1"/>
        <end position="290"/>
    </location>
</feature>
<feature type="active site" description="Acyl-thioester intermediate" evidence="1">
    <location>
        <position position="68"/>
    </location>
</feature>
<feature type="active site" evidence="1">
    <location>
        <position position="107"/>
    </location>
</feature>
<feature type="active site" evidence="1">
    <location>
        <position position="122"/>
    </location>
</feature>
<feature type="binding site" evidence="1">
    <location>
        <position position="103"/>
    </location>
    <ligand>
        <name>CoA</name>
        <dbReference type="ChEBI" id="CHEBI:57287"/>
    </ligand>
</feature>
<feature type="binding site" evidence="1">
    <location>
        <position position="104"/>
    </location>
    <ligand>
        <name>CoA</name>
        <dbReference type="ChEBI" id="CHEBI:57287"/>
    </ligand>
</feature>
<feature type="binding site" evidence="1">
    <location>
        <begin position="106"/>
        <end position="107"/>
    </location>
    <ligand>
        <name>substrate</name>
    </ligand>
</feature>
<feature type="binding site" evidence="1">
    <location>
        <position position="208"/>
    </location>
    <ligand>
        <name>CoA</name>
        <dbReference type="ChEBI" id="CHEBI:57287"/>
    </ligand>
</feature>
<feature type="binding site" evidence="1">
    <location>
        <position position="214"/>
    </location>
    <ligand>
        <name>CoA</name>
        <dbReference type="ChEBI" id="CHEBI:57287"/>
    </ligand>
</feature>
<feature type="binding site" evidence="1">
    <location>
        <position position="287"/>
    </location>
    <ligand>
        <name>CoA</name>
        <dbReference type="ChEBI" id="CHEBI:57287"/>
    </ligand>
</feature>
<feature type="sequence variant" description="In allele 2." evidence="3">
    <original>V</original>
    <variation>I</variation>
    <location>
        <position position="231"/>
    </location>
</feature>
<gene>
    <name type="primary">NAT2</name>
    <name type="synonym">AAC2</name>
    <name type="synonym">NAT</name>
</gene>
<organism>
    <name type="scientific">Macaca mulatta</name>
    <name type="common">Rhesus macaque</name>
    <dbReference type="NCBI Taxonomy" id="9544"/>
    <lineage>
        <taxon>Eukaryota</taxon>
        <taxon>Metazoa</taxon>
        <taxon>Chordata</taxon>
        <taxon>Craniata</taxon>
        <taxon>Vertebrata</taxon>
        <taxon>Euteleostomi</taxon>
        <taxon>Mammalia</taxon>
        <taxon>Eutheria</taxon>
        <taxon>Euarchontoglires</taxon>
        <taxon>Primates</taxon>
        <taxon>Haplorrhini</taxon>
        <taxon>Catarrhini</taxon>
        <taxon>Cercopithecidae</taxon>
        <taxon>Cercopithecinae</taxon>
        <taxon>Macaca</taxon>
    </lineage>
</organism>